<feature type="chain" id="PRO_0000146911" description="Adenosylcobinamide-GDP ribazoletransferase">
    <location>
        <begin position="1"/>
        <end position="241"/>
    </location>
</feature>
<feature type="transmembrane region" description="Helical" evidence="1">
    <location>
        <begin position="34"/>
        <end position="54"/>
    </location>
</feature>
<feature type="transmembrane region" description="Helical" evidence="1">
    <location>
        <begin position="108"/>
        <end position="128"/>
    </location>
</feature>
<feature type="transmembrane region" description="Helical" evidence="1">
    <location>
        <begin position="184"/>
        <end position="206"/>
    </location>
</feature>
<feature type="transmembrane region" description="Helical" evidence="1">
    <location>
        <begin position="220"/>
        <end position="240"/>
    </location>
</feature>
<comment type="function">
    <text evidence="1">Joins adenosylcobinamide-GDP and alpha-ribazole to generate adenosylcobalamin (Ado-cobalamin). Also synthesizes adenosylcobalamin 5'-phosphate from adenosylcobinamide-GDP and alpha-ribazole 5'-phosphate.</text>
</comment>
<comment type="catalytic activity">
    <reaction evidence="1">
        <text>alpha-ribazole + adenosylcob(III)inamide-GDP = adenosylcob(III)alamin + GMP + H(+)</text>
        <dbReference type="Rhea" id="RHEA:16049"/>
        <dbReference type="ChEBI" id="CHEBI:10329"/>
        <dbReference type="ChEBI" id="CHEBI:15378"/>
        <dbReference type="ChEBI" id="CHEBI:18408"/>
        <dbReference type="ChEBI" id="CHEBI:58115"/>
        <dbReference type="ChEBI" id="CHEBI:60487"/>
        <dbReference type="EC" id="2.7.8.26"/>
    </reaction>
</comment>
<comment type="catalytic activity">
    <reaction evidence="1">
        <text>alpha-ribazole 5'-phosphate + adenosylcob(III)inamide-GDP = adenosylcob(III)alamin 5'-phosphate + GMP + H(+)</text>
        <dbReference type="Rhea" id="RHEA:23560"/>
        <dbReference type="ChEBI" id="CHEBI:15378"/>
        <dbReference type="ChEBI" id="CHEBI:57918"/>
        <dbReference type="ChEBI" id="CHEBI:58115"/>
        <dbReference type="ChEBI" id="CHEBI:60487"/>
        <dbReference type="ChEBI" id="CHEBI:60493"/>
        <dbReference type="EC" id="2.7.8.26"/>
    </reaction>
</comment>
<comment type="cofactor">
    <cofactor evidence="1">
        <name>Mg(2+)</name>
        <dbReference type="ChEBI" id="CHEBI:18420"/>
    </cofactor>
</comment>
<comment type="pathway">
    <text evidence="1">Cofactor biosynthesis; adenosylcobalamin biosynthesis; adenosylcobalamin from cob(II)yrinate a,c-diamide: step 7/7.</text>
</comment>
<comment type="subcellular location">
    <subcellularLocation>
        <location evidence="1">Cell membrane</location>
        <topology evidence="1">Multi-pass membrane protein</topology>
    </subcellularLocation>
</comment>
<comment type="similarity">
    <text evidence="1">Belongs to the CobS family.</text>
</comment>
<evidence type="ECO:0000255" key="1">
    <source>
        <dbReference type="HAMAP-Rule" id="MF_00719"/>
    </source>
</evidence>
<dbReference type="EC" id="2.7.8.26" evidence="1"/>
<dbReference type="EMBL" id="AE009439">
    <property type="protein sequence ID" value="AAM02884.1"/>
    <property type="molecule type" value="Genomic_DNA"/>
</dbReference>
<dbReference type="FunCoup" id="Q8TUT2">
    <property type="interactions" value="84"/>
</dbReference>
<dbReference type="STRING" id="190192.MK1671"/>
<dbReference type="PaxDb" id="190192-MK1671"/>
<dbReference type="EnsemblBacteria" id="AAM02884">
    <property type="protein sequence ID" value="AAM02884"/>
    <property type="gene ID" value="MK1671"/>
</dbReference>
<dbReference type="KEGG" id="mka:MK1671"/>
<dbReference type="HOGENOM" id="CLU_057426_2_0_2"/>
<dbReference type="InParanoid" id="Q8TUT2"/>
<dbReference type="UniPathway" id="UPA00148">
    <property type="reaction ID" value="UER00238"/>
</dbReference>
<dbReference type="Proteomes" id="UP000001826">
    <property type="component" value="Chromosome"/>
</dbReference>
<dbReference type="GO" id="GO:0005886">
    <property type="term" value="C:plasma membrane"/>
    <property type="evidence" value="ECO:0007669"/>
    <property type="project" value="UniProtKB-SubCell"/>
</dbReference>
<dbReference type="GO" id="GO:0051073">
    <property type="term" value="F:adenosylcobinamide-GDP ribazoletransferase activity"/>
    <property type="evidence" value="ECO:0007669"/>
    <property type="project" value="UniProtKB-UniRule"/>
</dbReference>
<dbReference type="GO" id="GO:0008818">
    <property type="term" value="F:cobalamin 5'-phosphate synthase activity"/>
    <property type="evidence" value="ECO:0007669"/>
    <property type="project" value="UniProtKB-UniRule"/>
</dbReference>
<dbReference type="GO" id="GO:0009236">
    <property type="term" value="P:cobalamin biosynthetic process"/>
    <property type="evidence" value="ECO:0007669"/>
    <property type="project" value="UniProtKB-UniRule"/>
</dbReference>
<dbReference type="HAMAP" id="MF_00719">
    <property type="entry name" value="CobS"/>
    <property type="match status" value="1"/>
</dbReference>
<dbReference type="InterPro" id="IPR003805">
    <property type="entry name" value="CobS"/>
</dbReference>
<dbReference type="PANTHER" id="PTHR34148">
    <property type="entry name" value="ADENOSYLCOBINAMIDE-GDP RIBAZOLETRANSFERASE"/>
    <property type="match status" value="1"/>
</dbReference>
<dbReference type="PANTHER" id="PTHR34148:SF1">
    <property type="entry name" value="ADENOSYLCOBINAMIDE-GDP RIBAZOLETRANSFERASE"/>
    <property type="match status" value="1"/>
</dbReference>
<dbReference type="Pfam" id="PF02654">
    <property type="entry name" value="CobS"/>
    <property type="match status" value="1"/>
</dbReference>
<reference key="1">
    <citation type="journal article" date="2002" name="Proc. Natl. Acad. Sci. U.S.A.">
        <title>The complete genome of hyperthermophile Methanopyrus kandleri AV19 and monophyly of archaeal methanogens.</title>
        <authorList>
            <person name="Slesarev A.I."/>
            <person name="Mezhevaya K.V."/>
            <person name="Makarova K.S."/>
            <person name="Polushin N.N."/>
            <person name="Shcherbinina O.V."/>
            <person name="Shakhova V.V."/>
            <person name="Belova G.I."/>
            <person name="Aravind L."/>
            <person name="Natale D.A."/>
            <person name="Rogozin I.B."/>
            <person name="Tatusov R.L."/>
            <person name="Wolf Y.I."/>
            <person name="Stetter K.O."/>
            <person name="Malykh A.G."/>
            <person name="Koonin E.V."/>
            <person name="Kozyavkin S.A."/>
        </authorList>
    </citation>
    <scope>NUCLEOTIDE SEQUENCE [LARGE SCALE GENOMIC DNA]</scope>
    <source>
        <strain>AV19 / DSM 6324 / JCM 9639 / NBRC 100938</strain>
    </source>
</reference>
<proteinExistence type="inferred from homology"/>
<protein>
    <recommendedName>
        <fullName evidence="1">Adenosylcobinamide-GDP ribazoletransferase</fullName>
        <ecNumber evidence="1">2.7.8.26</ecNumber>
    </recommendedName>
    <alternativeName>
        <fullName evidence="1">Cobalamin synthase</fullName>
    </alternativeName>
    <alternativeName>
        <fullName evidence="1">Cobalamin-5'-phosphate synthase</fullName>
    </alternativeName>
</protein>
<gene>
    <name evidence="1" type="primary">cobS</name>
    <name type="ordered locus">MK1671</name>
</gene>
<keyword id="KW-1003">Cell membrane</keyword>
<keyword id="KW-0169">Cobalamin biosynthesis</keyword>
<keyword id="KW-0460">Magnesium</keyword>
<keyword id="KW-0472">Membrane</keyword>
<keyword id="KW-1185">Reference proteome</keyword>
<keyword id="KW-0808">Transferase</keyword>
<keyword id="KW-0812">Transmembrane</keyword>
<keyword id="KW-1133">Transmembrane helix</keyword>
<sequence>MIRVEFLKVFRFLTVLPIGEHPKSPREIGEQAWLGLPAVGLVSGLLAGVVAWAFAGTPVRGCLVVLTLLVLEGAQHFDGLVDVGDALMAGVISEEGATKAMRDPRVGVGGLAIGSMALLLAVASFGWIPFEVLVPIEVFSRFTVLPMAAVGEPAPASYSGRVFTEYVDADQVLLGGILSTVVSLPFSPVATLTCAVCSAVVAWTCLEAARRTIRGVNGDFLGASIWVSRVLSAVCLSSLPW</sequence>
<name>COBS_METKA</name>
<accession>Q8TUT2</accession>
<organism>
    <name type="scientific">Methanopyrus kandleri (strain AV19 / DSM 6324 / JCM 9639 / NBRC 100938)</name>
    <dbReference type="NCBI Taxonomy" id="190192"/>
    <lineage>
        <taxon>Archaea</taxon>
        <taxon>Methanobacteriati</taxon>
        <taxon>Methanobacteriota</taxon>
        <taxon>Methanomada group</taxon>
        <taxon>Methanopyri</taxon>
        <taxon>Methanopyrales</taxon>
        <taxon>Methanopyraceae</taxon>
        <taxon>Methanopyrus</taxon>
    </lineage>
</organism>